<sequence length="198" mass="22897">MFLFGKQKTPKEVLRENQRNLNKSMREIDRERVALQNQEKKIILDIKKMAKQGQMNSAKIMAKDLVRTRYHIQKFYEMKTQLQAVSLRIQTLQSTQAMAEAMKGVTKAMITMNRQMNLPQFTKIMMEFEQQSDKMDMKEEMMNDTMDQVMEQDGEEEQSQEILNQVLDEIGIDLASQLVDAPTTVGTSVASKHQVNSG</sequence>
<organism>
    <name type="scientific">Dictyostelium discoideum</name>
    <name type="common">Social amoeba</name>
    <dbReference type="NCBI Taxonomy" id="44689"/>
    <lineage>
        <taxon>Eukaryota</taxon>
        <taxon>Amoebozoa</taxon>
        <taxon>Evosea</taxon>
        <taxon>Eumycetozoa</taxon>
        <taxon>Dictyostelia</taxon>
        <taxon>Dictyosteliales</taxon>
        <taxon>Dictyosteliaceae</taxon>
        <taxon>Dictyostelium</taxon>
    </lineage>
</organism>
<comment type="function">
    <text evidence="1">Probable core component of the endosomal sorting required for transport complex III (ESCRT-III) which is involved in multivesicular bodies (MVBs) formation and sorting of endosomal cargo proteins into MVBs. MVBs contain intraluminal vesicles (ILVs) that are generated by invagination and scission from the limiting membrane of the endosome and are delivered to lysosomes enabling degradation of membrane proteins (By similarity).</text>
</comment>
<comment type="subunit">
    <text evidence="1">Probable core component of the endosomal sorting required for transport complex III (ESCRT-III). ESCRT-III components are thought to multimerize to form a flat lattice on the perimeter membrane of the endosome (By similarity).</text>
</comment>
<comment type="subcellular location">
    <subcellularLocation>
        <location evidence="1">Endosome membrane</location>
        <topology evidence="1">Peripheral membrane protein</topology>
        <orientation evidence="1">Cytoplasmic side</orientation>
    </subcellularLocation>
</comment>
<comment type="similarity">
    <text evidence="3">Belongs to the SNF7 family.</text>
</comment>
<name>CM2A2_DICDI</name>
<protein>
    <recommendedName>
        <fullName>Charged multivesicular body protein 2a homolog 2</fullName>
    </recommendedName>
    <alternativeName>
        <fullName>Vacuolar protein-sorting-associated protein 2B</fullName>
    </alternativeName>
</protein>
<keyword id="KW-0175">Coiled coil</keyword>
<keyword id="KW-0967">Endosome</keyword>
<keyword id="KW-0472">Membrane</keyword>
<keyword id="KW-0653">Protein transport</keyword>
<keyword id="KW-1185">Reference proteome</keyword>
<keyword id="KW-0813">Transport</keyword>
<evidence type="ECO:0000250" key="1"/>
<evidence type="ECO:0000255" key="2"/>
<evidence type="ECO:0000305" key="3"/>
<dbReference type="EMBL" id="AAFI02000190">
    <property type="protein sequence ID" value="EAL61179.1"/>
    <property type="molecule type" value="Genomic_DNA"/>
</dbReference>
<dbReference type="RefSeq" id="XP_629585.1">
    <property type="nucleotide sequence ID" value="XM_629583.1"/>
</dbReference>
<dbReference type="SMR" id="Q54DB1"/>
<dbReference type="FunCoup" id="Q54DB1">
    <property type="interactions" value="878"/>
</dbReference>
<dbReference type="STRING" id="44689.Q54DB1"/>
<dbReference type="PaxDb" id="44689-DDB0234176"/>
<dbReference type="EnsemblProtists" id="EAL61179">
    <property type="protein sequence ID" value="EAL61179"/>
    <property type="gene ID" value="DDB_G0292400"/>
</dbReference>
<dbReference type="GeneID" id="8628645"/>
<dbReference type="KEGG" id="ddi:DDB_G0292400"/>
<dbReference type="dictyBase" id="DDB_G0292400">
    <property type="gene designation" value="vps2B"/>
</dbReference>
<dbReference type="VEuPathDB" id="AmoebaDB:DDB_G0292400"/>
<dbReference type="eggNOG" id="KOG3230">
    <property type="taxonomic scope" value="Eukaryota"/>
</dbReference>
<dbReference type="HOGENOM" id="CLU_069208_1_1_1"/>
<dbReference type="InParanoid" id="Q54DB1"/>
<dbReference type="OMA" id="KMAKMNQ"/>
<dbReference type="PhylomeDB" id="Q54DB1"/>
<dbReference type="Reactome" id="R-DDI-1632852">
    <property type="pathway name" value="Macroautophagy"/>
</dbReference>
<dbReference type="Reactome" id="R-DDI-917729">
    <property type="pathway name" value="Endosomal Sorting Complex Required For Transport (ESCRT)"/>
</dbReference>
<dbReference type="Reactome" id="R-DDI-9668328">
    <property type="pathway name" value="Sealing of the nuclear envelope (NE) by ESCRT-III"/>
</dbReference>
<dbReference type="PRO" id="PR:Q54DB1"/>
<dbReference type="Proteomes" id="UP000002195">
    <property type="component" value="Chromosome 6"/>
</dbReference>
<dbReference type="GO" id="GO:0000815">
    <property type="term" value="C:ESCRT III complex"/>
    <property type="evidence" value="ECO:0000318"/>
    <property type="project" value="GO_Central"/>
</dbReference>
<dbReference type="GO" id="GO:0005771">
    <property type="term" value="C:multivesicular body"/>
    <property type="evidence" value="ECO:0000318"/>
    <property type="project" value="GO_Central"/>
</dbReference>
<dbReference type="GO" id="GO:0032509">
    <property type="term" value="P:endosome transport via multivesicular body sorting pathway"/>
    <property type="evidence" value="ECO:0000318"/>
    <property type="project" value="GO_Central"/>
</dbReference>
<dbReference type="GO" id="GO:0045324">
    <property type="term" value="P:late endosome to vacuole transport"/>
    <property type="evidence" value="ECO:0000318"/>
    <property type="project" value="GO_Central"/>
</dbReference>
<dbReference type="GO" id="GO:0015031">
    <property type="term" value="P:protein transport"/>
    <property type="evidence" value="ECO:0000318"/>
    <property type="project" value="GO_Central"/>
</dbReference>
<dbReference type="Gene3D" id="6.10.140.1230">
    <property type="match status" value="1"/>
</dbReference>
<dbReference type="InterPro" id="IPR005024">
    <property type="entry name" value="Snf7_fam"/>
</dbReference>
<dbReference type="PANTHER" id="PTHR10476">
    <property type="entry name" value="CHARGED MULTIVESICULAR BODY PROTEIN"/>
    <property type="match status" value="1"/>
</dbReference>
<dbReference type="Pfam" id="PF03357">
    <property type="entry name" value="Snf7"/>
    <property type="match status" value="1"/>
</dbReference>
<reference key="1">
    <citation type="journal article" date="2005" name="Nature">
        <title>The genome of the social amoeba Dictyostelium discoideum.</title>
        <authorList>
            <person name="Eichinger L."/>
            <person name="Pachebat J.A."/>
            <person name="Gloeckner G."/>
            <person name="Rajandream M.A."/>
            <person name="Sucgang R."/>
            <person name="Berriman M."/>
            <person name="Song J."/>
            <person name="Olsen R."/>
            <person name="Szafranski K."/>
            <person name="Xu Q."/>
            <person name="Tunggal B."/>
            <person name="Kummerfeld S."/>
            <person name="Madera M."/>
            <person name="Konfortov B.A."/>
            <person name="Rivero F."/>
            <person name="Bankier A.T."/>
            <person name="Lehmann R."/>
            <person name="Hamlin N."/>
            <person name="Davies R."/>
            <person name="Gaudet P."/>
            <person name="Fey P."/>
            <person name="Pilcher K."/>
            <person name="Chen G."/>
            <person name="Saunders D."/>
            <person name="Sodergren E.J."/>
            <person name="Davis P."/>
            <person name="Kerhornou A."/>
            <person name="Nie X."/>
            <person name="Hall N."/>
            <person name="Anjard C."/>
            <person name="Hemphill L."/>
            <person name="Bason N."/>
            <person name="Farbrother P."/>
            <person name="Desany B."/>
            <person name="Just E."/>
            <person name="Morio T."/>
            <person name="Rost R."/>
            <person name="Churcher C.M."/>
            <person name="Cooper J."/>
            <person name="Haydock S."/>
            <person name="van Driessche N."/>
            <person name="Cronin A."/>
            <person name="Goodhead I."/>
            <person name="Muzny D.M."/>
            <person name="Mourier T."/>
            <person name="Pain A."/>
            <person name="Lu M."/>
            <person name="Harper D."/>
            <person name="Lindsay R."/>
            <person name="Hauser H."/>
            <person name="James K.D."/>
            <person name="Quiles M."/>
            <person name="Madan Babu M."/>
            <person name="Saito T."/>
            <person name="Buchrieser C."/>
            <person name="Wardroper A."/>
            <person name="Felder M."/>
            <person name="Thangavelu M."/>
            <person name="Johnson D."/>
            <person name="Knights A."/>
            <person name="Loulseged H."/>
            <person name="Mungall K.L."/>
            <person name="Oliver K."/>
            <person name="Price C."/>
            <person name="Quail M.A."/>
            <person name="Urushihara H."/>
            <person name="Hernandez J."/>
            <person name="Rabbinowitsch E."/>
            <person name="Steffen D."/>
            <person name="Sanders M."/>
            <person name="Ma J."/>
            <person name="Kohara Y."/>
            <person name="Sharp S."/>
            <person name="Simmonds M.N."/>
            <person name="Spiegler S."/>
            <person name="Tivey A."/>
            <person name="Sugano S."/>
            <person name="White B."/>
            <person name="Walker D."/>
            <person name="Woodward J.R."/>
            <person name="Winckler T."/>
            <person name="Tanaka Y."/>
            <person name="Shaulsky G."/>
            <person name="Schleicher M."/>
            <person name="Weinstock G.M."/>
            <person name="Rosenthal A."/>
            <person name="Cox E.C."/>
            <person name="Chisholm R.L."/>
            <person name="Gibbs R.A."/>
            <person name="Loomis W.F."/>
            <person name="Platzer M."/>
            <person name="Kay R.R."/>
            <person name="Williams J.G."/>
            <person name="Dear P.H."/>
            <person name="Noegel A.A."/>
            <person name="Barrell B.G."/>
            <person name="Kuspa A."/>
        </authorList>
    </citation>
    <scope>NUCLEOTIDE SEQUENCE [LARGE SCALE GENOMIC DNA]</scope>
    <source>
        <strain>AX4</strain>
    </source>
</reference>
<accession>Q54DB1</accession>
<feature type="chain" id="PRO_0000328592" description="Charged multivesicular body protein 2a homolog 2">
    <location>
        <begin position="1"/>
        <end position="198"/>
    </location>
</feature>
<feature type="coiled-coil region" evidence="2">
    <location>
        <begin position="11"/>
        <end position="42"/>
    </location>
</feature>
<proteinExistence type="inferred from homology"/>
<gene>
    <name type="primary">chmp2a2</name>
    <name type="synonym">vps2B</name>
    <name type="ORF">DDB_G0292400</name>
</gene>